<feature type="chain" id="PRO_0000066616" description="Glutathione peroxidase 1">
    <location>
        <begin position="1"/>
        <end position="200"/>
    </location>
</feature>
<feature type="active site" evidence="2">
    <location>
        <position position="46"/>
    </location>
</feature>
<feature type="site" description="Subject to oxidation and hydroselenide loss to dehydroalanine" evidence="1">
    <location>
        <position position="46"/>
    </location>
</feature>
<feature type="non-standard amino acid" description="Selenocysteine" evidence="5">
    <location>
        <position position="46"/>
    </location>
</feature>
<feature type="modified residue" description="Phosphoserine" evidence="3">
    <location>
        <position position="31"/>
    </location>
</feature>
<feature type="modified residue" description="N6-acetyllysine; alternate" evidence="5">
    <location>
        <position position="85"/>
    </location>
</feature>
<feature type="modified residue" description="N6-succinyllysine; alternate" evidence="5">
    <location>
        <position position="85"/>
    </location>
</feature>
<feature type="modified residue" description="N6-acetyllysine; alternate" evidence="5">
    <location>
        <position position="111"/>
    </location>
</feature>
<feature type="modified residue" description="N6-succinyllysine; alternate" evidence="5">
    <location>
        <position position="111"/>
    </location>
</feature>
<feature type="modified residue" description="N6-acetyllysine" evidence="5">
    <location>
        <position position="118"/>
    </location>
</feature>
<feature type="modified residue" description="N6-acetyllysine; alternate" evidence="5">
    <location>
        <position position="145"/>
    </location>
</feature>
<feature type="modified residue" description="N6-succinyllysine; alternate" evidence="5">
    <location>
        <position position="145"/>
    </location>
</feature>
<feature type="modified residue" description="Phosphoserine" evidence="3">
    <location>
        <position position="194"/>
    </location>
</feature>
<keyword id="KW-0007">Acetylation</keyword>
<keyword id="KW-0963">Cytoplasm</keyword>
<keyword id="KW-0443">Lipid metabolism</keyword>
<keyword id="KW-0496">Mitochondrion</keyword>
<keyword id="KW-0560">Oxidoreductase</keyword>
<keyword id="KW-0575">Peroxidase</keyword>
<keyword id="KW-0597">Phosphoprotein</keyword>
<keyword id="KW-1185">Reference proteome</keyword>
<keyword id="KW-0712">Selenocysteine</keyword>
<protein>
    <recommendedName>
        <fullName evidence="6">Glutathione peroxidase 1</fullName>
        <shortName>GPx-1</shortName>
        <shortName>GSHPx-1</shortName>
        <ecNumber evidence="4">1.11.1.9</ecNumber>
    </recommendedName>
    <alternativeName>
        <fullName>Cellular glutathione peroxidase</fullName>
    </alternativeName>
    <alternativeName>
        <fullName>Phospholipid-hydroperoxide glutathione peroxidase GPX1</fullName>
        <ecNumber evidence="4">1.11.1.12</ecNumber>
    </alternativeName>
</protein>
<comment type="function">
    <text evidence="5">Catalyzes the reduction of hydroperoxides in a glutathione-dependent manner thus regulating cellular redox homeostasis. Can reduce small soluble hydroperoxides such as H2O2, cumene hydroperoxide and tert-butyl hydroperoxide, as well as several fatty acid-derived hydroperoxides. In platelets catalyzes the reduction of 12-hydroperoxyeicosatetraenoic acid, the primary product of the arachidonate 12-lipoxygenase pathway.</text>
</comment>
<comment type="catalytic activity">
    <reaction evidence="5">
        <text>2 glutathione + H2O2 = glutathione disulfide + 2 H2O</text>
        <dbReference type="Rhea" id="RHEA:16833"/>
        <dbReference type="ChEBI" id="CHEBI:15377"/>
        <dbReference type="ChEBI" id="CHEBI:16240"/>
        <dbReference type="ChEBI" id="CHEBI:57925"/>
        <dbReference type="ChEBI" id="CHEBI:58297"/>
        <dbReference type="EC" id="1.11.1.9"/>
    </reaction>
    <physiologicalReaction direction="left-to-right" evidence="5">
        <dbReference type="Rhea" id="RHEA:16834"/>
    </physiologicalReaction>
</comment>
<comment type="catalytic activity">
    <reaction evidence="4">
        <text>a hydroperoxy polyunsaturated fatty acid + 2 glutathione = a hydroxy polyunsaturated fatty acid + glutathione disulfide + H2O</text>
        <dbReference type="Rhea" id="RHEA:19057"/>
        <dbReference type="ChEBI" id="CHEBI:15377"/>
        <dbReference type="ChEBI" id="CHEBI:57925"/>
        <dbReference type="ChEBI" id="CHEBI:58297"/>
        <dbReference type="ChEBI" id="CHEBI:131871"/>
        <dbReference type="ChEBI" id="CHEBI:134019"/>
        <dbReference type="EC" id="1.11.1.12"/>
    </reaction>
    <physiologicalReaction direction="left-to-right" evidence="4">
        <dbReference type="Rhea" id="RHEA:19058"/>
    </physiologicalReaction>
</comment>
<comment type="catalytic activity">
    <reaction evidence="4">
        <text>tert-butyl hydroperoxide + 2 glutathione = tert-butanol + glutathione disulfide + H2O</text>
        <dbReference type="Rhea" id="RHEA:69412"/>
        <dbReference type="ChEBI" id="CHEBI:15377"/>
        <dbReference type="ChEBI" id="CHEBI:45895"/>
        <dbReference type="ChEBI" id="CHEBI:57925"/>
        <dbReference type="ChEBI" id="CHEBI:58297"/>
        <dbReference type="ChEBI" id="CHEBI:64090"/>
    </reaction>
    <physiologicalReaction direction="left-to-right" evidence="4">
        <dbReference type="Rhea" id="RHEA:69413"/>
    </physiologicalReaction>
</comment>
<comment type="catalytic activity">
    <reaction evidence="4">
        <text>cumene hydroperoxide + 2 glutathione = 2-phenylpropan-2-ol + glutathione disulfide + H2O</text>
        <dbReference type="Rhea" id="RHEA:69651"/>
        <dbReference type="ChEBI" id="CHEBI:15377"/>
        <dbReference type="ChEBI" id="CHEBI:57925"/>
        <dbReference type="ChEBI" id="CHEBI:58297"/>
        <dbReference type="ChEBI" id="CHEBI:78673"/>
        <dbReference type="ChEBI" id="CHEBI:131607"/>
    </reaction>
    <physiologicalReaction direction="left-to-right" evidence="4">
        <dbReference type="Rhea" id="RHEA:69652"/>
    </physiologicalReaction>
</comment>
<comment type="catalytic activity">
    <reaction evidence="4">
        <text>(13S)-hydroperoxy-(9Z,11E)-octadecadienoate + 2 glutathione = (13S)-hydroxy-(9Z,11E)-octadecadienoate + glutathione disulfide + H2O</text>
        <dbReference type="Rhea" id="RHEA:48888"/>
        <dbReference type="ChEBI" id="CHEBI:15377"/>
        <dbReference type="ChEBI" id="CHEBI:57466"/>
        <dbReference type="ChEBI" id="CHEBI:57925"/>
        <dbReference type="ChEBI" id="CHEBI:58297"/>
        <dbReference type="ChEBI" id="CHEBI:90850"/>
    </reaction>
    <physiologicalReaction direction="left-to-right" evidence="4">
        <dbReference type="Rhea" id="RHEA:48889"/>
    </physiologicalReaction>
</comment>
<comment type="catalytic activity">
    <reaction evidence="4">
        <text>(9S)-hydroperoxy-(10E,12Z)-octadecadienoate + 2 glutathione = (9S)-hydroxy-(10E,12Z)-octadecadienoate + glutathione disulfide + H2O</text>
        <dbReference type="Rhea" id="RHEA:76687"/>
        <dbReference type="ChEBI" id="CHEBI:15377"/>
        <dbReference type="ChEBI" id="CHEBI:57925"/>
        <dbReference type="ChEBI" id="CHEBI:58297"/>
        <dbReference type="ChEBI" id="CHEBI:60955"/>
        <dbReference type="ChEBI" id="CHEBI:77852"/>
    </reaction>
    <physiologicalReaction direction="left-to-right" evidence="4">
        <dbReference type="Rhea" id="RHEA:76688"/>
    </physiologicalReaction>
</comment>
<comment type="catalytic activity">
    <reaction evidence="4">
        <text>(5S)-hydroperoxy-(6E,8Z,11Z,14Z)-eicosatetraenoate + 2 glutathione = (5S)-hydroxy-(6E,8Z,11Z,14Z)-eicosatetraenoate + glutathione disulfide + H2O</text>
        <dbReference type="Rhea" id="RHEA:48620"/>
        <dbReference type="ChEBI" id="CHEBI:15377"/>
        <dbReference type="ChEBI" id="CHEBI:57450"/>
        <dbReference type="ChEBI" id="CHEBI:57925"/>
        <dbReference type="ChEBI" id="CHEBI:58297"/>
        <dbReference type="ChEBI" id="CHEBI:90632"/>
    </reaction>
    <physiologicalReaction direction="left-to-right" evidence="4">
        <dbReference type="Rhea" id="RHEA:48621"/>
    </physiologicalReaction>
</comment>
<comment type="catalytic activity">
    <reaction evidence="5">
        <text>(12S)-hydroperoxy-(5Z,8Z,10E,14Z)-eicosatetraenoate + 2 glutathione = (12S)-hydroxy-(5Z,8Z,10E,14Z)-eicosatetraenoate + glutathione disulfide + H2O</text>
        <dbReference type="Rhea" id="RHEA:50708"/>
        <dbReference type="ChEBI" id="CHEBI:15377"/>
        <dbReference type="ChEBI" id="CHEBI:57444"/>
        <dbReference type="ChEBI" id="CHEBI:57925"/>
        <dbReference type="ChEBI" id="CHEBI:58297"/>
        <dbReference type="ChEBI" id="CHEBI:90680"/>
    </reaction>
    <physiologicalReaction direction="left-to-right" evidence="5">
        <dbReference type="Rhea" id="RHEA:50709"/>
    </physiologicalReaction>
</comment>
<comment type="catalytic activity">
    <reaction evidence="4">
        <text>(12R)-hydroperoxy-(5Z,8Z,10E,14Z)-eicosatetraenoate + 2 glutathione = (12R)-hydroxy-(5Z,8Z,10E,14Z)-eicosatetraenoate + glutathione disulfide + H2O</text>
        <dbReference type="Rhea" id="RHEA:76691"/>
        <dbReference type="ChEBI" id="CHEBI:15377"/>
        <dbReference type="ChEBI" id="CHEBI:57925"/>
        <dbReference type="ChEBI" id="CHEBI:58297"/>
        <dbReference type="ChEBI" id="CHEBI:75230"/>
        <dbReference type="ChEBI" id="CHEBI:83343"/>
    </reaction>
    <physiologicalReaction direction="left-to-right" evidence="4">
        <dbReference type="Rhea" id="RHEA:76692"/>
    </physiologicalReaction>
</comment>
<comment type="catalytic activity">
    <reaction evidence="4">
        <text>(15S)-hydroperoxy-(5Z,8Z,11Z,13E)-eicosatetraenoate + 2 glutathione = (15S)-hydroxy-(5Z,8Z,11Z,13E)-eicosatetraenoate + glutathione disulfide + H2O</text>
        <dbReference type="Rhea" id="RHEA:76695"/>
        <dbReference type="ChEBI" id="CHEBI:15377"/>
        <dbReference type="ChEBI" id="CHEBI:57409"/>
        <dbReference type="ChEBI" id="CHEBI:57446"/>
        <dbReference type="ChEBI" id="CHEBI:57925"/>
        <dbReference type="ChEBI" id="CHEBI:58297"/>
    </reaction>
    <physiologicalReaction direction="left-to-right" evidence="4">
        <dbReference type="Rhea" id="RHEA:76696"/>
    </physiologicalReaction>
</comment>
<comment type="catalytic activity">
    <reaction evidence="4">
        <text>(5S)-hydroperoxy-(6E,8Z,11Z,14Z,17Z)-eicosapentaenoate + 2 glutathione = (5S)-hydroxy-(6E,8Z,11Z,14Z,17Z)-eicosapentaenoate + glutathione disulfide + H2O</text>
        <dbReference type="Rhea" id="RHEA:76699"/>
        <dbReference type="ChEBI" id="CHEBI:15377"/>
        <dbReference type="ChEBI" id="CHEBI:57925"/>
        <dbReference type="ChEBI" id="CHEBI:58297"/>
        <dbReference type="ChEBI" id="CHEBI:195399"/>
        <dbReference type="ChEBI" id="CHEBI:195400"/>
    </reaction>
    <physiologicalReaction direction="left-to-right" evidence="4">
        <dbReference type="Rhea" id="RHEA:76700"/>
    </physiologicalReaction>
</comment>
<comment type="catalytic activity">
    <reaction evidence="4">
        <text>(12S)-hydroperoxy-(5Z,8Z,10E,14Z,17Z)-eicosapentaenoate + 2 glutathione = (12S)-hydroxy-(5Z,8Z,10E,14Z,17Z)-eicosapentaenoate + glutathione disulfide + H2O</text>
        <dbReference type="Rhea" id="RHEA:76703"/>
        <dbReference type="ChEBI" id="CHEBI:15377"/>
        <dbReference type="ChEBI" id="CHEBI:57925"/>
        <dbReference type="ChEBI" id="CHEBI:58297"/>
        <dbReference type="ChEBI" id="CHEBI:90772"/>
        <dbReference type="ChEBI" id="CHEBI:195401"/>
    </reaction>
    <physiologicalReaction direction="left-to-right" evidence="4">
        <dbReference type="Rhea" id="RHEA:76704"/>
    </physiologicalReaction>
</comment>
<comment type="catalytic activity">
    <reaction evidence="4">
        <text>(15S)-hydroperoxy-(5Z,8Z,11Z,13E,17Z)-eicosapentaenoate + 2 glutathione = (15S)-hydroxy-(5Z,8Z,11Z,13E,17Z)-eicosapentaenoate + glutathione disulfide + H2O</text>
        <dbReference type="Rhea" id="RHEA:76707"/>
        <dbReference type="ChEBI" id="CHEBI:15377"/>
        <dbReference type="ChEBI" id="CHEBI:57925"/>
        <dbReference type="ChEBI" id="CHEBI:58297"/>
        <dbReference type="ChEBI" id="CHEBI:132087"/>
        <dbReference type="ChEBI" id="CHEBI:194369"/>
    </reaction>
    <physiologicalReaction direction="left-to-right" evidence="4">
        <dbReference type="Rhea" id="RHEA:76708"/>
    </physiologicalReaction>
</comment>
<comment type="catalytic activity">
    <reaction evidence="4">
        <text>(15S)-hydroperoxy-(11Z,13E)-eicosadienoate + 2 glutathione = (15S)-hydroxy-(11Z,13E)-eicosadienoate + glutathione disulfide + H2O</text>
        <dbReference type="Rhea" id="RHEA:76711"/>
        <dbReference type="ChEBI" id="CHEBI:15377"/>
        <dbReference type="ChEBI" id="CHEBI:57925"/>
        <dbReference type="ChEBI" id="CHEBI:58297"/>
        <dbReference type="ChEBI" id="CHEBI:144832"/>
        <dbReference type="ChEBI" id="CHEBI:195402"/>
    </reaction>
    <physiologicalReaction direction="left-to-right" evidence="4">
        <dbReference type="Rhea" id="RHEA:76712"/>
    </physiologicalReaction>
</comment>
<comment type="catalytic activity">
    <reaction evidence="4">
        <text>(17S)-hydroperoxy-(4Z,7Z,10Z,13Z,15E,19Z)-docosahexaenoate + 2 glutathione = (17S)-hydroxy-(4Z,7Z,10Z,13Z,15E,19Z)-docosahexaenoate + glutathione disulfide + H2O</text>
        <dbReference type="Rhea" id="RHEA:76715"/>
        <dbReference type="ChEBI" id="CHEBI:15377"/>
        <dbReference type="ChEBI" id="CHEBI:57925"/>
        <dbReference type="ChEBI" id="CHEBI:58297"/>
        <dbReference type="ChEBI" id="CHEBI:133795"/>
        <dbReference type="ChEBI" id="CHEBI:195403"/>
    </reaction>
    <physiologicalReaction direction="left-to-right" evidence="4">
        <dbReference type="Rhea" id="RHEA:76716"/>
    </physiologicalReaction>
</comment>
<comment type="subunit">
    <text evidence="5">Homotetramer. Interacts with MIEN1 (By similarity).</text>
</comment>
<comment type="subcellular location">
    <subcellularLocation>
        <location evidence="5">Cytoplasm</location>
    </subcellularLocation>
    <subcellularLocation>
        <location evidence="5">Mitochondrion</location>
    </subcellularLocation>
</comment>
<comment type="PTM">
    <text evidence="5">During periods of oxidative stress, Sec-46 may react with a superoxide radical, irreversibly lose hydroselenide and be converted to dehydroalanine.</text>
</comment>
<comment type="similarity">
    <text evidence="6">Belongs to the glutathione peroxidase family.</text>
</comment>
<gene>
    <name type="primary">GPX1</name>
</gene>
<proteinExistence type="evidence at transcript level"/>
<reference key="1">
    <citation type="journal article" date="1989" name="Nucleic Acids Res.">
        <title>Nucleotide sequence of cDNA for rabbit glutathione peroxidase.</title>
        <authorList>
            <person name="Akasaka M."/>
            <person name="Mizoguchi J."/>
            <person name="Yoshimura S."/>
            <person name="Watanabe K."/>
        </authorList>
    </citation>
    <scope>NUCLEOTIDE SEQUENCE [MRNA]</scope>
    <source>
        <strain>New Zealand white</strain>
        <tissue>Liver</tissue>
    </source>
</reference>
<accession>P11909</accession>
<name>GPX1_RABIT</name>
<dbReference type="EC" id="1.11.1.9" evidence="4"/>
<dbReference type="EC" id="1.11.1.12" evidence="4"/>
<dbReference type="EMBL" id="X13837">
    <property type="protein sequence ID" value="CAB43546.1"/>
    <property type="molecule type" value="mRNA"/>
</dbReference>
<dbReference type="PIR" id="S03723">
    <property type="entry name" value="S03723"/>
</dbReference>
<dbReference type="RefSeq" id="NP_001078913.1">
    <property type="nucleotide sequence ID" value="NM_001085444.1"/>
</dbReference>
<dbReference type="FunCoup" id="P11909">
    <property type="interactions" value="593"/>
</dbReference>
<dbReference type="STRING" id="9986.ENSOCUP00000005141"/>
<dbReference type="PeroxiBase" id="3729">
    <property type="entry name" value="OcuGPx01"/>
</dbReference>
<dbReference type="PaxDb" id="9986-ENSOCUP00000005141"/>
<dbReference type="GeneID" id="100009258"/>
<dbReference type="KEGG" id="ocu:100009258"/>
<dbReference type="CTD" id="2876"/>
<dbReference type="eggNOG" id="KOG1651">
    <property type="taxonomic scope" value="Eukaryota"/>
</dbReference>
<dbReference type="InParanoid" id="P11909"/>
<dbReference type="OrthoDB" id="446890at2759"/>
<dbReference type="Proteomes" id="UP000001811">
    <property type="component" value="Unplaced"/>
</dbReference>
<dbReference type="GO" id="GO:0005829">
    <property type="term" value="C:cytosol"/>
    <property type="evidence" value="ECO:0000250"/>
    <property type="project" value="UniProtKB"/>
</dbReference>
<dbReference type="GO" id="GO:0005739">
    <property type="term" value="C:mitochondrion"/>
    <property type="evidence" value="ECO:0007669"/>
    <property type="project" value="UniProtKB-SubCell"/>
</dbReference>
<dbReference type="GO" id="GO:0004602">
    <property type="term" value="F:glutathione peroxidase activity"/>
    <property type="evidence" value="ECO:0000250"/>
    <property type="project" value="UniProtKB"/>
</dbReference>
<dbReference type="GO" id="GO:0047066">
    <property type="term" value="F:phospholipid-hydroperoxide glutathione peroxidase activity"/>
    <property type="evidence" value="ECO:0000250"/>
    <property type="project" value="UniProtKB"/>
</dbReference>
<dbReference type="GO" id="GO:0019369">
    <property type="term" value="P:arachidonate metabolic process"/>
    <property type="evidence" value="ECO:0000250"/>
    <property type="project" value="UniProtKB"/>
</dbReference>
<dbReference type="GO" id="GO:0006749">
    <property type="term" value="P:glutathione metabolic process"/>
    <property type="evidence" value="ECO:0007669"/>
    <property type="project" value="TreeGrafter"/>
</dbReference>
<dbReference type="GO" id="GO:0042744">
    <property type="term" value="P:hydrogen peroxide catabolic process"/>
    <property type="evidence" value="ECO:0007669"/>
    <property type="project" value="TreeGrafter"/>
</dbReference>
<dbReference type="GO" id="GO:0019372">
    <property type="term" value="P:lipoxygenase pathway"/>
    <property type="evidence" value="ECO:0000250"/>
    <property type="project" value="UniProtKB"/>
</dbReference>
<dbReference type="GO" id="GO:0042542">
    <property type="term" value="P:response to hydrogen peroxide"/>
    <property type="evidence" value="ECO:0007669"/>
    <property type="project" value="TreeGrafter"/>
</dbReference>
<dbReference type="GO" id="GO:0010269">
    <property type="term" value="P:response to selenium ion"/>
    <property type="evidence" value="ECO:0007669"/>
    <property type="project" value="TreeGrafter"/>
</dbReference>
<dbReference type="CDD" id="cd00340">
    <property type="entry name" value="GSH_Peroxidase"/>
    <property type="match status" value="1"/>
</dbReference>
<dbReference type="FunFam" id="3.40.30.10:FF:000153">
    <property type="entry name" value="Glutathione peroxidase"/>
    <property type="match status" value="1"/>
</dbReference>
<dbReference type="Gene3D" id="3.40.30.10">
    <property type="entry name" value="Glutaredoxin"/>
    <property type="match status" value="1"/>
</dbReference>
<dbReference type="InterPro" id="IPR000889">
    <property type="entry name" value="Glutathione_peroxidase"/>
</dbReference>
<dbReference type="InterPro" id="IPR029759">
    <property type="entry name" value="GPX_AS"/>
</dbReference>
<dbReference type="InterPro" id="IPR029760">
    <property type="entry name" value="GPX_CS"/>
</dbReference>
<dbReference type="InterPro" id="IPR036249">
    <property type="entry name" value="Thioredoxin-like_sf"/>
</dbReference>
<dbReference type="PANTHER" id="PTHR11592">
    <property type="entry name" value="GLUTATHIONE PEROXIDASE"/>
    <property type="match status" value="1"/>
</dbReference>
<dbReference type="PANTHER" id="PTHR11592:SF41">
    <property type="entry name" value="GLUTATHIONE PEROXIDASE 1"/>
    <property type="match status" value="1"/>
</dbReference>
<dbReference type="Pfam" id="PF00255">
    <property type="entry name" value="GSHPx"/>
    <property type="match status" value="1"/>
</dbReference>
<dbReference type="PIRSF" id="PIRSF000303">
    <property type="entry name" value="Glutathion_perox"/>
    <property type="match status" value="1"/>
</dbReference>
<dbReference type="PRINTS" id="PR01011">
    <property type="entry name" value="GLUTPROXDASE"/>
</dbReference>
<dbReference type="SUPFAM" id="SSF52833">
    <property type="entry name" value="Thioredoxin-like"/>
    <property type="match status" value="1"/>
</dbReference>
<dbReference type="PROSITE" id="PS00460">
    <property type="entry name" value="GLUTATHIONE_PEROXID_1"/>
    <property type="match status" value="1"/>
</dbReference>
<dbReference type="PROSITE" id="PS00763">
    <property type="entry name" value="GLUTATHIONE_PEROXID_2"/>
    <property type="match status" value="1"/>
</dbReference>
<dbReference type="PROSITE" id="PS51355">
    <property type="entry name" value="GLUTATHIONE_PEROXID_3"/>
    <property type="match status" value="1"/>
</dbReference>
<evidence type="ECO:0000250" key="1"/>
<evidence type="ECO:0000250" key="2">
    <source>
        <dbReference type="UniProtKB" id="O70325"/>
    </source>
</evidence>
<evidence type="ECO:0000250" key="3">
    <source>
        <dbReference type="UniProtKB" id="P04041"/>
    </source>
</evidence>
<evidence type="ECO:0000250" key="4">
    <source>
        <dbReference type="UniProtKB" id="P07203"/>
    </source>
</evidence>
<evidence type="ECO:0000250" key="5">
    <source>
        <dbReference type="UniProtKB" id="P11352"/>
    </source>
</evidence>
<evidence type="ECO:0000305" key="6"/>
<organism>
    <name type="scientific">Oryctolagus cuniculus</name>
    <name type="common">Rabbit</name>
    <dbReference type="NCBI Taxonomy" id="9986"/>
    <lineage>
        <taxon>Eukaryota</taxon>
        <taxon>Metazoa</taxon>
        <taxon>Chordata</taxon>
        <taxon>Craniata</taxon>
        <taxon>Vertebrata</taxon>
        <taxon>Euteleostomi</taxon>
        <taxon>Mammalia</taxon>
        <taxon>Eutheria</taxon>
        <taxon>Euarchontoglires</taxon>
        <taxon>Glires</taxon>
        <taxon>Lagomorpha</taxon>
        <taxon>Leporidae</taxon>
        <taxon>Oryctolagus</taxon>
    </lineage>
</organism>
<sequence length="200" mass="21883">MCAARMAAAAQSVYSFSAHPLAGGEPVNLGSLRGKVLLIENVASLUGTTVRDYTQMNELQERLGPRALVVLGFPCNQFGHQENAKNEEILNSLKYVRPGGGFEPNFMLFQKCEVNGAKASPLFAFLREALPPPSDDPTALMTDPKFITWCPVCRNDVSWSFEKFLVGPDGVPVRRYSRRFPTIDIEPDIQALLSKGSGGA</sequence>